<evidence type="ECO:0000255" key="1">
    <source>
        <dbReference type="HAMAP-Rule" id="MF_04044"/>
    </source>
</evidence>
<evidence type="ECO:0000256" key="2">
    <source>
        <dbReference type="SAM" id="MobiDB-lite"/>
    </source>
</evidence>
<proteinExistence type="inferred from homology"/>
<feature type="chain" id="PRO_0000406796" description="Large tegument protein deneddylase">
    <location>
        <begin position="1"/>
        <end position="3195"/>
    </location>
</feature>
<feature type="domain" description="Peptidase C76" evidence="1">
    <location>
        <begin position="10"/>
        <end position="242"/>
    </location>
</feature>
<feature type="region of interest" description="Disordered" evidence="2">
    <location>
        <begin position="287"/>
        <end position="374"/>
    </location>
</feature>
<feature type="region of interest" description="Disordered" evidence="2">
    <location>
        <begin position="2407"/>
        <end position="2776"/>
    </location>
</feature>
<feature type="region of interest" description="Disordered" evidence="2">
    <location>
        <begin position="2829"/>
        <end position="3068"/>
    </location>
</feature>
<feature type="region of interest" description="Disordered" evidence="2">
    <location>
        <begin position="3128"/>
        <end position="3147"/>
    </location>
</feature>
<feature type="compositionally biased region" description="Basic residues" evidence="2">
    <location>
        <begin position="338"/>
        <end position="347"/>
    </location>
</feature>
<feature type="compositionally biased region" description="Basic and acidic residues" evidence="2">
    <location>
        <begin position="2470"/>
        <end position="2482"/>
    </location>
</feature>
<feature type="compositionally biased region" description="Low complexity" evidence="2">
    <location>
        <begin position="2491"/>
        <end position="2503"/>
    </location>
</feature>
<feature type="compositionally biased region" description="Basic and acidic residues" evidence="2">
    <location>
        <begin position="2504"/>
        <end position="2527"/>
    </location>
</feature>
<feature type="compositionally biased region" description="Basic and acidic residues" evidence="2">
    <location>
        <begin position="2538"/>
        <end position="2562"/>
    </location>
</feature>
<feature type="compositionally biased region" description="Basic residues" evidence="2">
    <location>
        <begin position="2588"/>
        <end position="2615"/>
    </location>
</feature>
<feature type="compositionally biased region" description="Basic residues" evidence="2">
    <location>
        <begin position="2636"/>
        <end position="2648"/>
    </location>
</feature>
<feature type="compositionally biased region" description="Basic and acidic residues" evidence="2">
    <location>
        <begin position="2649"/>
        <end position="2672"/>
    </location>
</feature>
<feature type="compositionally biased region" description="Basic and acidic residues" evidence="2">
    <location>
        <begin position="2687"/>
        <end position="2696"/>
    </location>
</feature>
<feature type="compositionally biased region" description="Pro residues" evidence="2">
    <location>
        <begin position="2701"/>
        <end position="2712"/>
    </location>
</feature>
<feature type="compositionally biased region" description="Basic and acidic residues" evidence="2">
    <location>
        <begin position="2714"/>
        <end position="2723"/>
    </location>
</feature>
<feature type="compositionally biased region" description="Acidic residues" evidence="2">
    <location>
        <begin position="2748"/>
        <end position="2768"/>
    </location>
</feature>
<feature type="compositionally biased region" description="Acidic residues" evidence="2">
    <location>
        <begin position="2835"/>
        <end position="2844"/>
    </location>
</feature>
<feature type="compositionally biased region" description="Polar residues" evidence="2">
    <location>
        <begin position="2850"/>
        <end position="2864"/>
    </location>
</feature>
<feature type="compositionally biased region" description="Basic and acidic residues" evidence="2">
    <location>
        <begin position="2869"/>
        <end position="2878"/>
    </location>
</feature>
<feature type="compositionally biased region" description="Low complexity" evidence="2">
    <location>
        <begin position="2887"/>
        <end position="2903"/>
    </location>
</feature>
<feature type="compositionally biased region" description="Basic and acidic residues" evidence="2">
    <location>
        <begin position="2959"/>
        <end position="2981"/>
    </location>
</feature>
<feature type="compositionally biased region" description="Acidic residues" evidence="2">
    <location>
        <begin position="2982"/>
        <end position="2994"/>
    </location>
</feature>
<feature type="compositionally biased region" description="Basic and acidic residues" evidence="2">
    <location>
        <begin position="2995"/>
        <end position="3021"/>
    </location>
</feature>
<feature type="compositionally biased region" description="Basic and acidic residues" evidence="2">
    <location>
        <begin position="3050"/>
        <end position="3062"/>
    </location>
</feature>
<feature type="compositionally biased region" description="Basic and acidic residues" evidence="2">
    <location>
        <begin position="3131"/>
        <end position="3140"/>
    </location>
</feature>
<feature type="active site" evidence="1">
    <location>
        <position position="30"/>
    </location>
</feature>
<feature type="active site" evidence="1">
    <location>
        <position position="173"/>
    </location>
</feature>
<feature type="active site" evidence="1">
    <location>
        <position position="175"/>
    </location>
</feature>
<feature type="site" description="Important for catalytic activity" evidence="1">
    <location>
        <position position="17"/>
    </location>
</feature>
<gene>
    <name type="primary">UL36</name>
</gene>
<organismHost>
    <name type="scientific">Amazona oratrix</name>
    <name type="common">yellow-headed parrot</name>
    <dbReference type="NCBI Taxonomy" id="152276"/>
</organismHost>
<name>LTP_PSHV1</name>
<organism>
    <name type="scientific">Psittacid herpesvirus 1 (isolate Amazon parrot/-/97-0001/1997)</name>
    <name type="common">PsHV-1</name>
    <name type="synonym">Pacheco's disease virus</name>
    <dbReference type="NCBI Taxonomy" id="670426"/>
    <lineage>
        <taxon>Viruses</taxon>
        <taxon>Duplodnaviria</taxon>
        <taxon>Heunggongvirae</taxon>
        <taxon>Peploviricota</taxon>
        <taxon>Herviviricetes</taxon>
        <taxon>Herpesvirales</taxon>
        <taxon>Orthoherpesviridae</taxon>
        <taxon>Alphaherpesvirinae</taxon>
        <taxon>Iltovirus</taxon>
        <taxon>Iltovirus psittacidalpha1</taxon>
        <taxon>Psittacid alphaherpesvirus 1</taxon>
    </lineage>
</organism>
<keyword id="KW-1035">Host cytoplasm</keyword>
<keyword id="KW-1048">Host nucleus</keyword>
<keyword id="KW-0945">Host-virus interaction</keyword>
<keyword id="KW-0378">Hydrolase</keyword>
<keyword id="KW-1127">Modulation of host ubiquitin pathway by viral deubiquitinase</keyword>
<keyword id="KW-1130">Modulation of host ubiquitin pathway by virus</keyword>
<keyword id="KW-0645">Protease</keyword>
<keyword id="KW-1185">Reference proteome</keyword>
<keyword id="KW-0677">Repeat</keyword>
<keyword id="KW-0788">Thiol protease</keyword>
<keyword id="KW-0833">Ubl conjugation pathway</keyword>
<keyword id="KW-0946">Virion</keyword>
<keyword id="KW-0920">Virion tegument</keyword>
<sequence>MWPPGLGTVVAAASRSQFDAMYEEMCYAMCVETSAAFLRACELAGPQAVQSQNVLDTILDQGAEITRTSVACETLPGGVKRYNMIDCQELPRLWRGSGQEPDMLLLHTTTFGNIPYDSTFDYEEKVLMLNGQQLGEKAAAMAREGAAAVLVIGNRGLGVAFTGGRHDPVFVFDPHGWMGGAAYMSRLPNPTSLTGFIADYVERRSGIVVTLTFLLWLYPDGWNIEQESPELRVEVISAALRAISQPPDFVFLDQFSETVVSPALPVPMGALRADRFAAKSIRAILARGTAPSPKKKPDSGEHGLPAGRPKPPKRHTPRSQNPALLDSTEKLSNLSPVKVKKPNKGKKMSVIAEPPSAAARTEQRGPGDSLGALAERPPWRLQGVRAAADVIAVPAASALAGLPEKPSDKLRGVLKYLPEAPTGGLSLGSGNALWAAILGTRVASLTDRLLVFLVENGITIRKAESEVGFLLDPVLAALAHRPDRGAVASLIGDTRLNLFALVARKAALLRLTELRDDRVSAVLVHKVQQVSSAIVSDTKTISAKLGALVDEISSEHPADAYGTLEKELLAFSLEKTAVVERPDETTAPILELVERAAEIVDAIEKETRAKAEREDRARRADEKLLAFAHSVWDEIDDIAGDVTRGVDVGSSQASAAASLAKRERIDIPEPSSMPPREDYSELKILDDKAKANAQKITDSAGKMLKVYANVIDYSISAFTSGTQSAIGRFALASPALDHMKAWLDRIAYADTLVDSLAGLTGRRESASPDWGRLSSLEPVRILEGLIETGADLSSDENLNHWTFQLFGAHAAGFMPSPSKWISAIHGINTRAHEVGLSATALAELETEIKAAEAMVADPGVRLECAKHALESAKAAVAGKSDPEQKARLAAAQARAAKLVDSCQRDLDEAKRLVDEATKRDAEIKKAAAALLRPVEKYQGLRGLGRSMAAAGLSDDAVAGIVAADTQVARVLRADAEAILANYERDFAELRGAQLLGTSAPLLRAVNFIDPRSGLGLLEPGSRIFLSEANDDLMDAVEDARTTRNTDSCSRAISALERIKWVIVEAEGAGQWPKFAVAAARALEGLRAKALIDDRAGLVRTTLAGMLKRAAIVSETVAKDTDDPEAAAERALKFVEMARRELRELELTDAEELSSQDYVALERALVELAEASRQKSIGLKKHAWRSRLRTLLERDRDDGEFSLDAWDQARDEGECYGGRDAVNDDLIKLARAVIDGRIQLGLRLVRAFFANNPYAAQASQALPGDARGPVELLESIRVAKWIFAFPGVADTYEYLFGISVVKLKALCEIGEEIVEAFDAAGSSDKNIDMHAFVQTVAGKLFQVSELTEFFDFYVRSYELFLDIRAALAETAGRVGALERTALEQLGAEERAAESIRDPEAAKERLERGDRDPDALTAMRELHGGLKLESKKQFEKTAYLEPLEYGYAEARRELERAIANVDAAKKLSQARVKDFLSSLLREREANDQELSRNLKTLKSVLAARSPKDVVAALNGAETLDAVVKIYADRLAEAEAENEAAIVGAETMEWLKFAAKTIDGSKMARETGGVGPTAAYAERLEKLCRARADADAKLKRLKDLYESFELALASAKEAGGKQKDESEDGWRRYEAAANNLLTSAEALGAQLRDEGNEQAGIKLLLLREPAAAAYEKGLENAAAVIKDVRTTLDDTSAGMRRLLTLYEAAKTEFAKPGLERLQKEISYAIAKYPVPKWFLALHAAVGKLVELRLGLYHAYEGLKISTIPYAPVAPESEYVMPDAALTAARVTAYMARSGKSVMTVTTHSLGIVGRAVVDEANQILEYKLCYATVSEKVAALWAAGSRLGAGQFGGLVLRDARDERGVEKFLGRGHAAVSLAATAAWLSGADTMITAELGSYVTFCATGHWPAMRDRKQLSMTVAACTTYCALAYATLTSTYGSAADTAVDSHGQFVPPEKFEAANTSGAVAAGAARGAKRKFALSIQDVLILLAACEPAHLTYFCRLDLLRQVEYMHKTLEAVLSRAVRDRVGVSCLEPPKADDTRKYMPVVMPAARGRFDKSYGACFAIDRHDWDSVKAPHYVGKMLEPWKTLPGTRENAERLERICGGTADAADGFTATLMMLAATAIPANLLEAMWALLGPRDEDLGENWQLGEGEVEGQWSGGAASAAAAAMLRFMLRRAAAVDNYTVATSGGTAGLALDSLSAKLLGPAGGSIMFLLKEDAVNLRRLLAFDVALLSILFGAKVVIAYETSALSRESGLLLCSSVFDARRGNRFADILCADHRACASDSAAAAADALKKIALADPNRIENACLLQQVEELASALHSKPLSYAQPFLFLANTSNQITQVLIPAKARPSEFFVTLRRDAAYEEVPLRRADRQAFPDEIDAKDIEGGDLFFSATVGGEVPVLDNPAHIAPAPPEYDRGEGNLFPFAGSRRSAPSEEEALSKAAGSKRNQIDAHGQNISQPARAGNTKIERASGKNRKTENNVTEHQTAARGRAAAPPTETKTTEKRQKCPPRESPLSRDERAPHDGLSAGAAEPRPPRGDSDDDRHKHETPHGVSDKAAEPPAVPSAEPRGPSTELIGGNWKSLPKTKPRRTSSGLRRKHQASASVHKHRTHGSSDDDSEDGEATYGFGSCRGRQRRSTLGGKKRSGTDRTAEFLKKATCVDKLEKFSRSGESPKAQNGTADVACDRLGERGNELSPPRAPASSPPPPGKQADHGIDQREIVPPNAQYGITTVVDPRQVRLPSSDDGDPAEEEDARDVEEGEEDVAGQWDSNYDVCLPTYDTDHAAQEEKDFDLASNNGTGGALPAADHAISAINDWVIADTDASAGVGTDWSEEDEDAPAADDGRSTNVEVATHGYTSDDSAADDESKRARATRDSSPPQHYPASPLAPSTPSSLPTPADTDNDTAILELDRNSGGDTDSNDDHAPPTDTGDAPPLCSEGELTPSTDEECAVVQDDARKKQENSSHERKDDGVRWEIDLDSDQGDYSDASDDCKIPDGPRVAPEKDIKNKQLEKSESDSCGGQGDPSTEPQQPLWEVYSPYDNSDSDDKAGNRKDPKLDGAALDMRSSRLRADAKSITSYVNDINEAVRDGGSAAAEFFARSEQSCIDSEDDARHLDKSRATLASDLDDHQSDQPRESLAPLDPETRSKMYTSLAVTCRLILRGMRHAQDAASAGVAELLTETNRIKMMLN</sequence>
<comment type="function">
    <text evidence="1">Large tegument protein that plays multiple roles in the viral cycle. During viral entry, remains associated with the capsid while most of the tegument is detached and participates in the capsid transport toward the host nucleus. Plays a role in the routing of the capsid at the nuclear pore complex and subsequent uncoating. Within the host nucleus, acts as a deneddylase and promotes the degradation of nuclear CRLs (cullin-RING ubiquitin ligases) and thereby stabilizes nuclear CRL substrates, while cytoplasmic CRLs remain unaffected. These modifications prevent host cell cycle S-phase progression and create a favorable environment allowing efficient viral genome replication. Participates later in the secondary envelopment of capsids. Indeed, plays a linker role for the association of the outer viral tegument to the capsids together with the inner tegument protein.</text>
</comment>
<comment type="catalytic activity">
    <reaction evidence="1">
        <text>Thiol-dependent hydrolysis of ester, thioester, amide, peptide and isopeptide bonds formed by the C-terminal Gly of ubiquitin (a 76-residue protein attached to proteins as an intracellular targeting signal).</text>
        <dbReference type="EC" id="3.4.19.12"/>
    </reaction>
</comment>
<comment type="subunit">
    <text evidence="1">Interacts with host CUL1 and CUL4A; these interactions inhibit the E3 ligase activity of cullins. Interacts with inner tegument protein. Interacts with capsid vertex specific component CVC2. Interacts with the major capsid protein/MCP.</text>
</comment>
<comment type="subcellular location">
    <subcellularLocation>
        <location evidence="1">Virion tegument</location>
    </subcellularLocation>
    <subcellularLocation>
        <location evidence="1">Host cytoplasm</location>
    </subcellularLocation>
    <subcellularLocation>
        <location evidence="1">Host nucleus</location>
    </subcellularLocation>
    <text evidence="1">Tightly associated with the capsid.</text>
</comment>
<comment type="similarity">
    <text evidence="1">Belongs to the herpesviridae large tegument protein family.</text>
</comment>
<protein>
    <recommendedName>
        <fullName evidence="1">Large tegument protein deneddylase</fullName>
        <ecNumber evidence="1">3.4.19.12</ecNumber>
        <ecNumber evidence="1">3.4.22.-</ecNumber>
    </recommendedName>
</protein>
<dbReference type="EC" id="3.4.19.12" evidence="1"/>
<dbReference type="EC" id="3.4.22.-" evidence="1"/>
<dbReference type="EMBL" id="AY372243">
    <property type="protein sequence ID" value="AAQ73715.1"/>
    <property type="molecule type" value="Genomic_DNA"/>
</dbReference>
<dbReference type="RefSeq" id="NP_944409.1">
    <property type="nucleotide sequence ID" value="NC_005264.1"/>
</dbReference>
<dbReference type="SMR" id="Q6UDJ5"/>
<dbReference type="GeneID" id="2657005"/>
<dbReference type="KEGG" id="vg:2657005"/>
<dbReference type="Proteomes" id="UP000006840">
    <property type="component" value="Segment"/>
</dbReference>
<dbReference type="GO" id="GO:0030430">
    <property type="term" value="C:host cell cytoplasm"/>
    <property type="evidence" value="ECO:0007669"/>
    <property type="project" value="UniProtKB-SubCell"/>
</dbReference>
<dbReference type="GO" id="GO:0042025">
    <property type="term" value="C:host cell nucleus"/>
    <property type="evidence" value="ECO:0007669"/>
    <property type="project" value="UniProtKB-SubCell"/>
</dbReference>
<dbReference type="GO" id="GO:0019033">
    <property type="term" value="C:viral tegument"/>
    <property type="evidence" value="ECO:0007669"/>
    <property type="project" value="UniProtKB-SubCell"/>
</dbReference>
<dbReference type="GO" id="GO:0004843">
    <property type="term" value="F:cysteine-type deubiquitinase activity"/>
    <property type="evidence" value="ECO:0007669"/>
    <property type="project" value="UniProtKB-EC"/>
</dbReference>
<dbReference type="GO" id="GO:0019784">
    <property type="term" value="F:deNEDDylase activity"/>
    <property type="evidence" value="ECO:0007669"/>
    <property type="project" value="InterPro"/>
</dbReference>
<dbReference type="GO" id="GO:0006508">
    <property type="term" value="P:proteolysis"/>
    <property type="evidence" value="ECO:0007669"/>
    <property type="project" value="UniProtKB-KW"/>
</dbReference>
<dbReference type="GO" id="GO:0039648">
    <property type="term" value="P:symbiont-mediated perturbation of host ubiquitin-like protein modification"/>
    <property type="evidence" value="ECO:0007669"/>
    <property type="project" value="UniProtKB-KW"/>
</dbReference>
<dbReference type="GO" id="GO:0039693">
    <property type="term" value="P:viral DNA genome replication"/>
    <property type="evidence" value="ECO:0007669"/>
    <property type="project" value="InterPro"/>
</dbReference>
<dbReference type="Gene3D" id="3.90.70.120">
    <property type="match status" value="1"/>
</dbReference>
<dbReference type="HAMAP" id="MF_04044">
    <property type="entry name" value="HSV_LTP"/>
    <property type="match status" value="1"/>
</dbReference>
<dbReference type="InterPro" id="IPR005210">
    <property type="entry name" value="Herpes_LT_deneddylase"/>
</dbReference>
<dbReference type="InterPro" id="IPR006928">
    <property type="entry name" value="Herpes_teg_USP"/>
</dbReference>
<dbReference type="InterPro" id="IPR034702">
    <property type="entry name" value="HSV_LTP"/>
</dbReference>
<dbReference type="InterPro" id="IPR038765">
    <property type="entry name" value="Papain-like_cys_pep_sf"/>
</dbReference>
<dbReference type="Pfam" id="PF04843">
    <property type="entry name" value="Herpes_teg_N"/>
    <property type="match status" value="1"/>
</dbReference>
<dbReference type="Pfam" id="PF03586">
    <property type="entry name" value="Herpes_UL36"/>
    <property type="match status" value="1"/>
</dbReference>
<dbReference type="SUPFAM" id="SSF54001">
    <property type="entry name" value="Cysteine proteinases"/>
    <property type="match status" value="1"/>
</dbReference>
<dbReference type="PROSITE" id="PS51521">
    <property type="entry name" value="HTUSP"/>
    <property type="match status" value="1"/>
</dbReference>
<reference key="1">
    <citation type="journal article" date="2006" name="J. Virol.">
        <title>Psittacid herpesvirus 1 and infectious laryngotracheitis virus: Comparative genome sequence analysis of two avian alphaherpesviruses.</title>
        <authorList>
            <person name="Thureen D.R."/>
            <person name="Keeler C.L. Jr."/>
        </authorList>
    </citation>
    <scope>NUCLEOTIDE SEQUENCE [LARGE SCALE GENOMIC DNA]</scope>
</reference>
<accession>Q6UDJ5</accession>